<organism>
    <name type="scientific">Canine coronavirus (strain BGF10)</name>
    <name type="common">CCoV</name>
    <name type="synonym">Canine enteric coronavirus</name>
    <dbReference type="NCBI Taxonomy" id="441619"/>
    <lineage>
        <taxon>Viruses</taxon>
        <taxon>Riboviria</taxon>
        <taxon>Orthornavirae</taxon>
        <taxon>Pisuviricota</taxon>
        <taxon>Pisoniviricetes</taxon>
        <taxon>Nidovirales</taxon>
        <taxon>Cornidovirineae</taxon>
        <taxon>Coronaviridae</taxon>
        <taxon>Orthocoronavirinae</taxon>
        <taxon>Alphacoronavirus</taxon>
        <taxon>Tegacovirus</taxon>
        <taxon>Alphacoronavirus 1</taxon>
    </lineage>
</organism>
<feature type="chain" id="PRO_0000289888" description="Non-structural protein 3b">
    <location>
        <begin position="1"/>
        <end position="250"/>
    </location>
</feature>
<feature type="transmembrane region" description="Helical" evidence="1">
    <location>
        <begin position="46"/>
        <end position="66"/>
    </location>
</feature>
<feature type="transmembrane region" description="Helical" evidence="1">
    <location>
        <begin position="75"/>
        <end position="95"/>
    </location>
</feature>
<feature type="transmembrane region" description="Helical" evidence="1">
    <location>
        <begin position="101"/>
        <end position="121"/>
    </location>
</feature>
<feature type="domain" description="CoV 3a-like viroporin TM" evidence="2">
    <location>
        <begin position="40"/>
        <end position="130"/>
    </location>
</feature>
<feature type="domain" description="CoV 3a-like viroporin CD" evidence="3">
    <location>
        <begin position="134"/>
        <end position="213"/>
    </location>
</feature>
<name>NS3B_CVCBG</name>
<sequence length="250" mass="28356">MIGGLFLNTLSFVIVSNHVVNNTANVHHIQQEHVIVQQTQIVSARTQNYYPEFSIAVLFVSFLALYRSTNFKTCVGILMFKIVSMTLIGPMLTAYGYYIDGIVTTTVLALRFIYLSYFWYVNNRFEFVLYNTTTLMFVHGRAAPFMRSSHSSIYVTLYGGINYMFVNDLTLHFVDPMLVSIAIRGLAHADLTVVRAVELLNGDFIYVFSQEPVVGVYNAAFSQAVLNEIDLKEEVEDHVYDVPSGINCHR</sequence>
<gene>
    <name type="ORF">3b</name>
</gene>
<keyword id="KW-1043">Host membrane</keyword>
<keyword id="KW-0472">Membrane</keyword>
<keyword id="KW-0812">Transmembrane</keyword>
<keyword id="KW-1133">Transmembrane helix</keyword>
<comment type="function">
    <text>May be a virulence factor.</text>
</comment>
<comment type="subcellular location">
    <subcellularLocation>
        <location evidence="4">Host membrane</location>
        <topology evidence="4">Multi-pass membrane protein</topology>
    </subcellularLocation>
</comment>
<comment type="similarity">
    <text evidence="4">Belongs to the coronaviruses NS3b protein family.</text>
</comment>
<protein>
    <recommendedName>
        <fullName>Non-structural protein 3b</fullName>
        <shortName>ns3b</shortName>
    </recommendedName>
    <alternativeName>
        <fullName>Accessory protein 3b</fullName>
    </alternativeName>
    <alternativeName>
        <fullName>Protein X2</fullName>
    </alternativeName>
</protein>
<accession>Q7T6T1</accession>
<evidence type="ECO:0000255" key="1"/>
<evidence type="ECO:0000255" key="2">
    <source>
        <dbReference type="PROSITE-ProRule" id="PRU01311"/>
    </source>
</evidence>
<evidence type="ECO:0000255" key="3">
    <source>
        <dbReference type="PROSITE-ProRule" id="PRU01312"/>
    </source>
</evidence>
<evidence type="ECO:0000305" key="4"/>
<dbReference type="EMBL" id="AY342160">
    <property type="protein sequence ID" value="AAQ17222.1"/>
    <property type="molecule type" value="Genomic_RNA"/>
</dbReference>
<dbReference type="GO" id="GO:0033644">
    <property type="term" value="C:host cell membrane"/>
    <property type="evidence" value="ECO:0007669"/>
    <property type="project" value="UniProtKB-SubCell"/>
</dbReference>
<dbReference type="GO" id="GO:0016020">
    <property type="term" value="C:membrane"/>
    <property type="evidence" value="ECO:0007669"/>
    <property type="project" value="UniProtKB-KW"/>
</dbReference>
<dbReference type="InterPro" id="IPR046446">
    <property type="entry name" value="a/bCoV_VIROPORIN_3A-like_CD"/>
</dbReference>
<dbReference type="InterPro" id="IPR046445">
    <property type="entry name" value="a/bCoV_VIROPORIN_3A-like_TM"/>
</dbReference>
<dbReference type="InterPro" id="IPR004293">
    <property type="entry name" value="Coronavirus_Orf3a/b"/>
</dbReference>
<dbReference type="Pfam" id="PF03053">
    <property type="entry name" value="Corona_NS3b"/>
    <property type="match status" value="1"/>
</dbReference>
<dbReference type="PROSITE" id="PS51967">
    <property type="entry name" value="COV_VIROPORIN_3A_CD"/>
    <property type="match status" value="1"/>
</dbReference>
<dbReference type="PROSITE" id="PS51966">
    <property type="entry name" value="COV_VIROPORIN_3A_TM"/>
    <property type="match status" value="1"/>
</dbReference>
<reference key="1">
    <citation type="journal article" date="2004" name="Virus Res.">
        <title>Molecular characterization of a virulent canine coronavirus BGF strain.</title>
        <authorList>
            <person name="Sanchez-Morgado J.M."/>
            <person name="Poynter S."/>
            <person name="Morris T.H."/>
        </authorList>
    </citation>
    <scope>NUCLEOTIDE SEQUENCE [GENOMIC RNA]</scope>
</reference>
<organismHost>
    <name type="scientific">Canis lupus familiaris</name>
    <name type="common">Dog</name>
    <name type="synonym">Canis familiaris</name>
    <dbReference type="NCBI Taxonomy" id="9615"/>
</organismHost>
<proteinExistence type="inferred from homology"/>